<evidence type="ECO:0000255" key="1">
    <source>
        <dbReference type="HAMAP-Rule" id="MF_00294"/>
    </source>
</evidence>
<evidence type="ECO:0000305" key="2"/>
<protein>
    <recommendedName>
        <fullName evidence="1">Large ribosomal subunit protein bL33</fullName>
    </recommendedName>
    <alternativeName>
        <fullName evidence="2">50S ribosomal protein L33</fullName>
    </alternativeName>
</protein>
<feature type="chain" id="PRO_1000004213" description="Large ribosomal subunit protein bL33">
    <location>
        <begin position="1"/>
        <end position="66"/>
    </location>
</feature>
<keyword id="KW-1185">Reference proteome</keyword>
<keyword id="KW-0687">Ribonucleoprotein</keyword>
<keyword id="KW-0689">Ribosomal protein</keyword>
<reference key="1">
    <citation type="journal article" date="2005" name="PLoS Biol.">
        <title>The Wolbachia genome of Brugia malayi: endosymbiont evolution within a human pathogenic nematode.</title>
        <authorList>
            <person name="Foster J."/>
            <person name="Ganatra M."/>
            <person name="Kamal I."/>
            <person name="Ware J."/>
            <person name="Makarova K."/>
            <person name="Ivanova N."/>
            <person name="Bhattacharyya A."/>
            <person name="Kapatral V."/>
            <person name="Kumar S."/>
            <person name="Posfai J."/>
            <person name="Vincze T."/>
            <person name="Ingram J."/>
            <person name="Moran L."/>
            <person name="Lapidus A."/>
            <person name="Omelchenko M."/>
            <person name="Kyrpides N."/>
            <person name="Ghedin E."/>
            <person name="Wang S."/>
            <person name="Goltsman E."/>
            <person name="Joukov V."/>
            <person name="Ostrovskaya O."/>
            <person name="Tsukerman K."/>
            <person name="Mazur M."/>
            <person name="Comb D."/>
            <person name="Koonin E."/>
            <person name="Slatko B."/>
        </authorList>
    </citation>
    <scope>NUCLEOTIDE SEQUENCE [LARGE SCALE GENOMIC DNA]</scope>
    <source>
        <strain>TRS</strain>
    </source>
</reference>
<dbReference type="EMBL" id="AE017321">
    <property type="protein sequence ID" value="AAW71085.1"/>
    <property type="molecule type" value="Genomic_DNA"/>
</dbReference>
<dbReference type="RefSeq" id="WP_011256695.1">
    <property type="nucleotide sequence ID" value="NC_006833.1"/>
</dbReference>
<dbReference type="SMR" id="Q5GSD9"/>
<dbReference type="STRING" id="292805.Wbm0497"/>
<dbReference type="KEGG" id="wbm:Wbm0497"/>
<dbReference type="eggNOG" id="COG0267">
    <property type="taxonomic scope" value="Bacteria"/>
</dbReference>
<dbReference type="HOGENOM" id="CLU_190949_1_0_5"/>
<dbReference type="Proteomes" id="UP000000534">
    <property type="component" value="Chromosome"/>
</dbReference>
<dbReference type="GO" id="GO:0005737">
    <property type="term" value="C:cytoplasm"/>
    <property type="evidence" value="ECO:0007669"/>
    <property type="project" value="UniProtKB-ARBA"/>
</dbReference>
<dbReference type="GO" id="GO:0015934">
    <property type="term" value="C:large ribosomal subunit"/>
    <property type="evidence" value="ECO:0007669"/>
    <property type="project" value="TreeGrafter"/>
</dbReference>
<dbReference type="GO" id="GO:0003735">
    <property type="term" value="F:structural constituent of ribosome"/>
    <property type="evidence" value="ECO:0007669"/>
    <property type="project" value="InterPro"/>
</dbReference>
<dbReference type="GO" id="GO:0006412">
    <property type="term" value="P:translation"/>
    <property type="evidence" value="ECO:0007669"/>
    <property type="project" value="UniProtKB-UniRule"/>
</dbReference>
<dbReference type="Gene3D" id="2.20.28.120">
    <property type="entry name" value="Ribosomal protein L33"/>
    <property type="match status" value="1"/>
</dbReference>
<dbReference type="HAMAP" id="MF_00294">
    <property type="entry name" value="Ribosomal_bL33"/>
    <property type="match status" value="1"/>
</dbReference>
<dbReference type="InterPro" id="IPR001705">
    <property type="entry name" value="Ribosomal_bL33"/>
</dbReference>
<dbReference type="InterPro" id="IPR018264">
    <property type="entry name" value="Ribosomal_bL33_CS"/>
</dbReference>
<dbReference type="InterPro" id="IPR038584">
    <property type="entry name" value="Ribosomal_bL33_sf"/>
</dbReference>
<dbReference type="InterPro" id="IPR011332">
    <property type="entry name" value="Ribosomal_zn-bd"/>
</dbReference>
<dbReference type="NCBIfam" id="NF001860">
    <property type="entry name" value="PRK00595.1"/>
    <property type="match status" value="1"/>
</dbReference>
<dbReference type="NCBIfam" id="TIGR01023">
    <property type="entry name" value="rpmG_bact"/>
    <property type="match status" value="1"/>
</dbReference>
<dbReference type="PANTHER" id="PTHR15238">
    <property type="entry name" value="54S RIBOSOMAL PROTEIN L39, MITOCHONDRIAL"/>
    <property type="match status" value="1"/>
</dbReference>
<dbReference type="PANTHER" id="PTHR15238:SF1">
    <property type="entry name" value="LARGE RIBOSOMAL SUBUNIT PROTEIN BL33M"/>
    <property type="match status" value="1"/>
</dbReference>
<dbReference type="Pfam" id="PF00471">
    <property type="entry name" value="Ribosomal_L33"/>
    <property type="match status" value="1"/>
</dbReference>
<dbReference type="SUPFAM" id="SSF57829">
    <property type="entry name" value="Zn-binding ribosomal proteins"/>
    <property type="match status" value="1"/>
</dbReference>
<dbReference type="PROSITE" id="PS00582">
    <property type="entry name" value="RIBOSOMAL_L33"/>
    <property type="match status" value="1"/>
</dbReference>
<accession>Q5GSD9</accession>
<gene>
    <name evidence="1" type="primary">rpmG</name>
    <name type="ordered locus">Wbm0497</name>
</gene>
<name>RL33_WOLTR</name>
<sequence>MAKKNASLLVKLVSSATKITSTGEEKSTGYFYVKKRNPKKLTRKLEFRKYDPVVRRHVLFKEEKLK</sequence>
<organism>
    <name type="scientific">Wolbachia sp. subsp. Brugia malayi (strain TRS)</name>
    <dbReference type="NCBI Taxonomy" id="292805"/>
    <lineage>
        <taxon>Bacteria</taxon>
        <taxon>Pseudomonadati</taxon>
        <taxon>Pseudomonadota</taxon>
        <taxon>Alphaproteobacteria</taxon>
        <taxon>Rickettsiales</taxon>
        <taxon>Anaplasmataceae</taxon>
        <taxon>Wolbachieae</taxon>
        <taxon>Wolbachia</taxon>
    </lineage>
</organism>
<proteinExistence type="inferred from homology"/>
<comment type="similarity">
    <text evidence="1">Belongs to the bacterial ribosomal protein bL33 family.</text>
</comment>